<comment type="function">
    <text evidence="1">Responsible for the coupling of flagellin expression to flagellar assembly by preventing expression of the flagellin genes when a component of the middle class of proteins is defective. It negatively regulates flagellar genes by inhibiting the activity of FliA by directly binding to FliA (By similarity).</text>
</comment>
<comment type="similarity">
    <text evidence="3">Belongs to the FlgM family.</text>
</comment>
<name>FLGM_YEREN</name>
<feature type="chain" id="PRO_0000087287" description="Negative regulator of flagellin synthesis">
    <location>
        <begin position="1"/>
        <end position="99"/>
    </location>
</feature>
<feature type="region of interest" description="Disordered" evidence="2">
    <location>
        <begin position="1"/>
        <end position="42"/>
    </location>
</feature>
<feature type="compositionally biased region" description="Polar residues" evidence="2">
    <location>
        <begin position="13"/>
        <end position="39"/>
    </location>
</feature>
<keyword id="KW-1005">Bacterial flagellum biogenesis</keyword>
<keyword id="KW-0678">Repressor</keyword>
<keyword id="KW-0804">Transcription</keyword>
<keyword id="KW-0805">Transcription regulation</keyword>
<organism>
    <name type="scientific">Yersinia enterocolitica</name>
    <dbReference type="NCBI Taxonomy" id="630"/>
    <lineage>
        <taxon>Bacteria</taxon>
        <taxon>Pseudomonadati</taxon>
        <taxon>Pseudomonadota</taxon>
        <taxon>Gammaproteobacteria</taxon>
        <taxon>Enterobacterales</taxon>
        <taxon>Yersiniaceae</taxon>
        <taxon>Yersinia</taxon>
    </lineage>
</organism>
<dbReference type="EMBL" id="Z48169">
    <property type="protein sequence ID" value="CAA88190.1"/>
    <property type="molecule type" value="Genomic_DNA"/>
</dbReference>
<dbReference type="RefSeq" id="WP_005160467.1">
    <property type="nucleotide sequence ID" value="NZ_WJHZ01000011.1"/>
</dbReference>
<dbReference type="SMR" id="P0C2V6"/>
<dbReference type="STRING" id="1443113.LC20_02153"/>
<dbReference type="GeneID" id="31409505"/>
<dbReference type="eggNOG" id="COG2747">
    <property type="taxonomic scope" value="Bacteria"/>
</dbReference>
<dbReference type="OMA" id="QSKLMQP"/>
<dbReference type="GO" id="GO:0044781">
    <property type="term" value="P:bacterial-type flagellum organization"/>
    <property type="evidence" value="ECO:0007669"/>
    <property type="project" value="UniProtKB-KW"/>
</dbReference>
<dbReference type="GO" id="GO:0045892">
    <property type="term" value="P:negative regulation of DNA-templated transcription"/>
    <property type="evidence" value="ECO:0007669"/>
    <property type="project" value="InterPro"/>
</dbReference>
<dbReference type="InterPro" id="IPR035890">
    <property type="entry name" value="Anti-sigma-28_factor_FlgM_sf"/>
</dbReference>
<dbReference type="InterPro" id="IPR007412">
    <property type="entry name" value="FlgM"/>
</dbReference>
<dbReference type="InterPro" id="IPR031316">
    <property type="entry name" value="FlgM_C"/>
</dbReference>
<dbReference type="NCBIfam" id="TIGR03824">
    <property type="entry name" value="FlgM_jcvi"/>
    <property type="match status" value="1"/>
</dbReference>
<dbReference type="Pfam" id="PF04316">
    <property type="entry name" value="FlgM"/>
    <property type="match status" value="1"/>
</dbReference>
<dbReference type="SUPFAM" id="SSF101498">
    <property type="entry name" value="Anti-sigma factor FlgM"/>
    <property type="match status" value="1"/>
</dbReference>
<evidence type="ECO:0000250" key="1"/>
<evidence type="ECO:0000256" key="2">
    <source>
        <dbReference type="SAM" id="MobiDB-lite"/>
    </source>
</evidence>
<evidence type="ECO:0000305" key="3"/>
<gene>
    <name type="primary">flgM</name>
</gene>
<sequence length="99" mass="10731">MSIDRTQPLLPVTQVQPRETSDIAQQTRKPSAQSKTPVSGTEVKLSDAQAKLMQPGSQDINVERVETLKQAIRSGQLTMDTGKIADALLKNVADDLKSS</sequence>
<reference key="1">
    <citation type="submission" date="1995-02" db="EMBL/GenBank/DDBJ databases">
        <title>Clustering of flagellar genes around invA, the Yersinia enterocolitica invasin locus.</title>
        <authorList>
            <person name="Fauconnier A."/>
            <person name="Allaoui A."/>
            <person name="van Elsen A."/>
            <person name="Cornelis G.R."/>
            <person name="Bollen A."/>
        </authorList>
    </citation>
    <scope>NUCLEOTIDE SEQUENCE [GENOMIC DNA]</scope>
    <source>
        <strain>W1024 / Serotype O:9</strain>
    </source>
</reference>
<proteinExistence type="inferred from homology"/>
<protein>
    <recommendedName>
        <fullName>Negative regulator of flagellin synthesis</fullName>
    </recommendedName>
    <alternativeName>
        <fullName>Anti-sigma-28 factor</fullName>
    </alternativeName>
</protein>
<accession>P0C2V6</accession>
<accession>Q56891</accession>
<accession>Q57401</accession>